<gene>
    <name evidence="1" type="primary">tig</name>
    <name type="ordered locus">LEUM_1522</name>
</gene>
<dbReference type="EC" id="5.2.1.8" evidence="1"/>
<dbReference type="EMBL" id="CP000414">
    <property type="protein sequence ID" value="ABJ62614.1"/>
    <property type="molecule type" value="Genomic_DNA"/>
</dbReference>
<dbReference type="RefSeq" id="WP_011680191.1">
    <property type="nucleotide sequence ID" value="NC_008531.1"/>
</dbReference>
<dbReference type="SMR" id="Q03W08"/>
<dbReference type="EnsemblBacteria" id="ABJ62614">
    <property type="protein sequence ID" value="ABJ62614"/>
    <property type="gene ID" value="LEUM_1522"/>
</dbReference>
<dbReference type="GeneID" id="29576221"/>
<dbReference type="KEGG" id="lme:LEUM_1522"/>
<dbReference type="eggNOG" id="COG0544">
    <property type="taxonomic scope" value="Bacteria"/>
</dbReference>
<dbReference type="HOGENOM" id="CLU_033058_3_2_9"/>
<dbReference type="Proteomes" id="UP000000362">
    <property type="component" value="Chromosome"/>
</dbReference>
<dbReference type="GO" id="GO:0005737">
    <property type="term" value="C:cytoplasm"/>
    <property type="evidence" value="ECO:0007669"/>
    <property type="project" value="UniProtKB-SubCell"/>
</dbReference>
<dbReference type="GO" id="GO:0003755">
    <property type="term" value="F:peptidyl-prolyl cis-trans isomerase activity"/>
    <property type="evidence" value="ECO:0007669"/>
    <property type="project" value="UniProtKB-UniRule"/>
</dbReference>
<dbReference type="GO" id="GO:0044183">
    <property type="term" value="F:protein folding chaperone"/>
    <property type="evidence" value="ECO:0007669"/>
    <property type="project" value="TreeGrafter"/>
</dbReference>
<dbReference type="GO" id="GO:0043022">
    <property type="term" value="F:ribosome binding"/>
    <property type="evidence" value="ECO:0007669"/>
    <property type="project" value="TreeGrafter"/>
</dbReference>
<dbReference type="GO" id="GO:0051083">
    <property type="term" value="P:'de novo' cotranslational protein folding"/>
    <property type="evidence" value="ECO:0007669"/>
    <property type="project" value="TreeGrafter"/>
</dbReference>
<dbReference type="GO" id="GO:0051301">
    <property type="term" value="P:cell division"/>
    <property type="evidence" value="ECO:0007669"/>
    <property type="project" value="UniProtKB-KW"/>
</dbReference>
<dbReference type="GO" id="GO:0061077">
    <property type="term" value="P:chaperone-mediated protein folding"/>
    <property type="evidence" value="ECO:0007669"/>
    <property type="project" value="TreeGrafter"/>
</dbReference>
<dbReference type="GO" id="GO:0015031">
    <property type="term" value="P:protein transport"/>
    <property type="evidence" value="ECO:0007669"/>
    <property type="project" value="UniProtKB-UniRule"/>
</dbReference>
<dbReference type="GO" id="GO:0043335">
    <property type="term" value="P:protein unfolding"/>
    <property type="evidence" value="ECO:0007669"/>
    <property type="project" value="TreeGrafter"/>
</dbReference>
<dbReference type="FunFam" id="3.10.50.40:FF:000001">
    <property type="entry name" value="Trigger factor"/>
    <property type="match status" value="1"/>
</dbReference>
<dbReference type="Gene3D" id="3.10.50.40">
    <property type="match status" value="1"/>
</dbReference>
<dbReference type="Gene3D" id="3.30.70.1050">
    <property type="entry name" value="Trigger factor ribosome-binding domain"/>
    <property type="match status" value="1"/>
</dbReference>
<dbReference type="Gene3D" id="1.10.3120.10">
    <property type="entry name" value="Trigger factor, C-terminal domain"/>
    <property type="match status" value="1"/>
</dbReference>
<dbReference type="HAMAP" id="MF_00303">
    <property type="entry name" value="Trigger_factor_Tig"/>
    <property type="match status" value="1"/>
</dbReference>
<dbReference type="InterPro" id="IPR046357">
    <property type="entry name" value="PPIase_dom_sf"/>
</dbReference>
<dbReference type="InterPro" id="IPR001179">
    <property type="entry name" value="PPIase_FKBP_dom"/>
</dbReference>
<dbReference type="InterPro" id="IPR005215">
    <property type="entry name" value="Trig_fac"/>
</dbReference>
<dbReference type="InterPro" id="IPR008880">
    <property type="entry name" value="Trigger_fac_C"/>
</dbReference>
<dbReference type="InterPro" id="IPR037041">
    <property type="entry name" value="Trigger_fac_C_sf"/>
</dbReference>
<dbReference type="InterPro" id="IPR008881">
    <property type="entry name" value="Trigger_fac_ribosome-bd_bac"/>
</dbReference>
<dbReference type="InterPro" id="IPR036611">
    <property type="entry name" value="Trigger_fac_ribosome-bd_sf"/>
</dbReference>
<dbReference type="InterPro" id="IPR027304">
    <property type="entry name" value="Trigger_fact/SurA_dom_sf"/>
</dbReference>
<dbReference type="NCBIfam" id="TIGR00115">
    <property type="entry name" value="tig"/>
    <property type="match status" value="1"/>
</dbReference>
<dbReference type="PANTHER" id="PTHR30560">
    <property type="entry name" value="TRIGGER FACTOR CHAPERONE AND PEPTIDYL-PROLYL CIS/TRANS ISOMERASE"/>
    <property type="match status" value="1"/>
</dbReference>
<dbReference type="PANTHER" id="PTHR30560:SF3">
    <property type="entry name" value="TRIGGER FACTOR-LIKE PROTEIN TIG, CHLOROPLASTIC"/>
    <property type="match status" value="1"/>
</dbReference>
<dbReference type="Pfam" id="PF00254">
    <property type="entry name" value="FKBP_C"/>
    <property type="match status" value="1"/>
</dbReference>
<dbReference type="Pfam" id="PF05698">
    <property type="entry name" value="Trigger_C"/>
    <property type="match status" value="1"/>
</dbReference>
<dbReference type="Pfam" id="PF05697">
    <property type="entry name" value="Trigger_N"/>
    <property type="match status" value="1"/>
</dbReference>
<dbReference type="PIRSF" id="PIRSF003095">
    <property type="entry name" value="Trigger_factor"/>
    <property type="match status" value="1"/>
</dbReference>
<dbReference type="SUPFAM" id="SSF54534">
    <property type="entry name" value="FKBP-like"/>
    <property type="match status" value="1"/>
</dbReference>
<dbReference type="SUPFAM" id="SSF109998">
    <property type="entry name" value="Triger factor/SurA peptide-binding domain-like"/>
    <property type="match status" value="1"/>
</dbReference>
<dbReference type="SUPFAM" id="SSF102735">
    <property type="entry name" value="Trigger factor ribosome-binding domain"/>
    <property type="match status" value="1"/>
</dbReference>
<dbReference type="PROSITE" id="PS50059">
    <property type="entry name" value="FKBP_PPIASE"/>
    <property type="match status" value="1"/>
</dbReference>
<feature type="chain" id="PRO_1000022703" description="Trigger factor">
    <location>
        <begin position="1"/>
        <end position="431"/>
    </location>
</feature>
<feature type="domain" description="PPIase FKBP-type" evidence="1">
    <location>
        <begin position="165"/>
        <end position="250"/>
    </location>
</feature>
<organism>
    <name type="scientific">Leuconostoc mesenteroides subsp. mesenteroides (strain ATCC 8293 / DSM 20343 / BCRC 11652 / CCM 1803 / JCM 6124 / NCDO 523 / NBRC 100496 / NCIMB 8023 / NCTC 12954 / NRRL B-1118 / 37Y)</name>
    <dbReference type="NCBI Taxonomy" id="203120"/>
    <lineage>
        <taxon>Bacteria</taxon>
        <taxon>Bacillati</taxon>
        <taxon>Bacillota</taxon>
        <taxon>Bacilli</taxon>
        <taxon>Lactobacillales</taxon>
        <taxon>Lactobacillaceae</taxon>
        <taxon>Leuconostoc</taxon>
    </lineage>
</organism>
<keyword id="KW-0131">Cell cycle</keyword>
<keyword id="KW-0132">Cell division</keyword>
<keyword id="KW-0143">Chaperone</keyword>
<keyword id="KW-0963">Cytoplasm</keyword>
<keyword id="KW-0413">Isomerase</keyword>
<keyword id="KW-1185">Reference proteome</keyword>
<keyword id="KW-0697">Rotamase</keyword>
<sequence>MSKWTPAADEKNQGTLEFEIARAQVEEGLEQAFQRNKNEVSIPGFRKGKVTKQLFFQKFGEEALYQQAMDIVLPAAYEAAIDEAGITPVGRPNIEPVSMNKGEAWTLKAVVKTAPAIKLGEYLNLEVEAQDEEVADADVDAEIKRLQDGQAELVLQEESVKAENGDTVVIDFDGSVDGVKFDGGQGKDFSLALGSGQFIPGFEEQLVGHTAGEDVNVNVTFPEDYQAADLAGKEALFEVTIHELKRKELPELDDEFAKDVDEEVETLAELKEKTSKKLADEKAQAAKAAFEDAVISKAVDNASVDGDEIPAEMIDEDVHRQIDQYLGQLQQQGISREMFFQISGQTEDDLHKQFEEGAETRVKTGLILEAIVAAEKIDPSAEQVSEEVASLAAQYNMEEDKVRAAISESMLKHDIAMREAIKKVTDSAKAV</sequence>
<protein>
    <recommendedName>
        <fullName evidence="1">Trigger factor</fullName>
        <shortName evidence="1">TF</shortName>
        <ecNumber evidence="1">5.2.1.8</ecNumber>
    </recommendedName>
    <alternativeName>
        <fullName evidence="1">PPIase</fullName>
    </alternativeName>
</protein>
<comment type="function">
    <text evidence="1">Involved in protein export. Acts as a chaperone by maintaining the newly synthesized protein in an open conformation. Functions as a peptidyl-prolyl cis-trans isomerase.</text>
</comment>
<comment type="catalytic activity">
    <reaction evidence="1">
        <text>[protein]-peptidylproline (omega=180) = [protein]-peptidylproline (omega=0)</text>
        <dbReference type="Rhea" id="RHEA:16237"/>
        <dbReference type="Rhea" id="RHEA-COMP:10747"/>
        <dbReference type="Rhea" id="RHEA-COMP:10748"/>
        <dbReference type="ChEBI" id="CHEBI:83833"/>
        <dbReference type="ChEBI" id="CHEBI:83834"/>
        <dbReference type="EC" id="5.2.1.8"/>
    </reaction>
</comment>
<comment type="subcellular location">
    <subcellularLocation>
        <location>Cytoplasm</location>
    </subcellularLocation>
    <text evidence="1">About half TF is bound to the ribosome near the polypeptide exit tunnel while the other half is free in the cytoplasm.</text>
</comment>
<comment type="domain">
    <text evidence="1">Consists of 3 domains; the N-terminus binds the ribosome, the middle domain has PPIase activity, while the C-terminus has intrinsic chaperone activity on its own.</text>
</comment>
<comment type="similarity">
    <text evidence="1">Belongs to the FKBP-type PPIase family. Tig subfamily.</text>
</comment>
<proteinExistence type="inferred from homology"/>
<accession>Q03W08</accession>
<name>TIG_LEUMM</name>
<evidence type="ECO:0000255" key="1">
    <source>
        <dbReference type="HAMAP-Rule" id="MF_00303"/>
    </source>
</evidence>
<reference key="1">
    <citation type="journal article" date="2006" name="Proc. Natl. Acad. Sci. U.S.A.">
        <title>Comparative genomics of the lactic acid bacteria.</title>
        <authorList>
            <person name="Makarova K.S."/>
            <person name="Slesarev A."/>
            <person name="Wolf Y.I."/>
            <person name="Sorokin A."/>
            <person name="Mirkin B."/>
            <person name="Koonin E.V."/>
            <person name="Pavlov A."/>
            <person name="Pavlova N."/>
            <person name="Karamychev V."/>
            <person name="Polouchine N."/>
            <person name="Shakhova V."/>
            <person name="Grigoriev I."/>
            <person name="Lou Y."/>
            <person name="Rohksar D."/>
            <person name="Lucas S."/>
            <person name="Huang K."/>
            <person name="Goodstein D.M."/>
            <person name="Hawkins T."/>
            <person name="Plengvidhya V."/>
            <person name="Welker D."/>
            <person name="Hughes J."/>
            <person name="Goh Y."/>
            <person name="Benson A."/>
            <person name="Baldwin K."/>
            <person name="Lee J.-H."/>
            <person name="Diaz-Muniz I."/>
            <person name="Dosti B."/>
            <person name="Smeianov V."/>
            <person name="Wechter W."/>
            <person name="Barabote R."/>
            <person name="Lorca G."/>
            <person name="Altermann E."/>
            <person name="Barrangou R."/>
            <person name="Ganesan B."/>
            <person name="Xie Y."/>
            <person name="Rawsthorne H."/>
            <person name="Tamir D."/>
            <person name="Parker C."/>
            <person name="Breidt F."/>
            <person name="Broadbent J.R."/>
            <person name="Hutkins R."/>
            <person name="O'Sullivan D."/>
            <person name="Steele J."/>
            <person name="Unlu G."/>
            <person name="Saier M.H. Jr."/>
            <person name="Klaenhammer T."/>
            <person name="Richardson P."/>
            <person name="Kozyavkin S."/>
            <person name="Weimer B.C."/>
            <person name="Mills D.A."/>
        </authorList>
    </citation>
    <scope>NUCLEOTIDE SEQUENCE [LARGE SCALE GENOMIC DNA]</scope>
    <source>
        <strain>ATCC 8293 / DSM 20343 / BCRC 11652 / CCM 1803 / JCM 6124 / NCDO 523 / NBRC 100496 / NCIMB 8023 / NCTC 12954 / NRRL B-1118 / 37Y</strain>
    </source>
</reference>